<dbReference type="EC" id="3.1.3.11" evidence="1"/>
<dbReference type="EMBL" id="CP000946">
    <property type="protein sequence ID" value="ACA79384.1"/>
    <property type="molecule type" value="Genomic_DNA"/>
</dbReference>
<dbReference type="RefSeq" id="WP_000853753.1">
    <property type="nucleotide sequence ID" value="NZ_MTFT01000012.1"/>
</dbReference>
<dbReference type="SMR" id="B1ISX3"/>
<dbReference type="GeneID" id="86861371"/>
<dbReference type="KEGG" id="ecl:EcolC_3779"/>
<dbReference type="HOGENOM" id="CLU_039977_2_2_6"/>
<dbReference type="UniPathway" id="UPA00138"/>
<dbReference type="GO" id="GO:0005829">
    <property type="term" value="C:cytosol"/>
    <property type="evidence" value="ECO:0007669"/>
    <property type="project" value="TreeGrafter"/>
</dbReference>
<dbReference type="GO" id="GO:0042132">
    <property type="term" value="F:fructose 1,6-bisphosphate 1-phosphatase activity"/>
    <property type="evidence" value="ECO:0007669"/>
    <property type="project" value="UniProtKB-UniRule"/>
</dbReference>
<dbReference type="GO" id="GO:0000287">
    <property type="term" value="F:magnesium ion binding"/>
    <property type="evidence" value="ECO:0007669"/>
    <property type="project" value="UniProtKB-UniRule"/>
</dbReference>
<dbReference type="GO" id="GO:0030388">
    <property type="term" value="P:fructose 1,6-bisphosphate metabolic process"/>
    <property type="evidence" value="ECO:0007669"/>
    <property type="project" value="TreeGrafter"/>
</dbReference>
<dbReference type="GO" id="GO:0006002">
    <property type="term" value="P:fructose 6-phosphate metabolic process"/>
    <property type="evidence" value="ECO:0007669"/>
    <property type="project" value="TreeGrafter"/>
</dbReference>
<dbReference type="GO" id="GO:0006000">
    <property type="term" value="P:fructose metabolic process"/>
    <property type="evidence" value="ECO:0007669"/>
    <property type="project" value="TreeGrafter"/>
</dbReference>
<dbReference type="GO" id="GO:0006094">
    <property type="term" value="P:gluconeogenesis"/>
    <property type="evidence" value="ECO:0007669"/>
    <property type="project" value="UniProtKB-UniRule"/>
</dbReference>
<dbReference type="GO" id="GO:0005986">
    <property type="term" value="P:sucrose biosynthetic process"/>
    <property type="evidence" value="ECO:0007669"/>
    <property type="project" value="TreeGrafter"/>
</dbReference>
<dbReference type="CDD" id="cd00354">
    <property type="entry name" value="FBPase"/>
    <property type="match status" value="1"/>
</dbReference>
<dbReference type="FunFam" id="3.30.540.10:FF:000002">
    <property type="entry name" value="Fructose-1,6-bisphosphatase class 1"/>
    <property type="match status" value="1"/>
</dbReference>
<dbReference type="FunFam" id="3.40.190.80:FF:000001">
    <property type="entry name" value="Fructose-1,6-bisphosphatase class 1"/>
    <property type="match status" value="1"/>
</dbReference>
<dbReference type="Gene3D" id="3.40.190.80">
    <property type="match status" value="1"/>
</dbReference>
<dbReference type="Gene3D" id="3.30.540.10">
    <property type="entry name" value="Fructose-1,6-Bisphosphatase, subunit A, domain 1"/>
    <property type="match status" value="1"/>
</dbReference>
<dbReference type="HAMAP" id="MF_01855">
    <property type="entry name" value="FBPase_class1"/>
    <property type="match status" value="1"/>
</dbReference>
<dbReference type="InterPro" id="IPR044015">
    <property type="entry name" value="FBPase_C_dom"/>
</dbReference>
<dbReference type="InterPro" id="IPR000146">
    <property type="entry name" value="FBPase_class-1"/>
</dbReference>
<dbReference type="InterPro" id="IPR033391">
    <property type="entry name" value="FBPase_N"/>
</dbReference>
<dbReference type="InterPro" id="IPR028343">
    <property type="entry name" value="FBPtase"/>
</dbReference>
<dbReference type="InterPro" id="IPR020548">
    <property type="entry name" value="Fructose_bisphosphatase_AS"/>
</dbReference>
<dbReference type="NCBIfam" id="NF006778">
    <property type="entry name" value="PRK09293.1-1"/>
    <property type="match status" value="1"/>
</dbReference>
<dbReference type="NCBIfam" id="NF006779">
    <property type="entry name" value="PRK09293.1-3"/>
    <property type="match status" value="1"/>
</dbReference>
<dbReference type="PANTHER" id="PTHR11556">
    <property type="entry name" value="FRUCTOSE-1,6-BISPHOSPHATASE-RELATED"/>
    <property type="match status" value="1"/>
</dbReference>
<dbReference type="PANTHER" id="PTHR11556:SF35">
    <property type="entry name" value="SEDOHEPTULOSE-1,7-BISPHOSPHATASE, CHLOROPLASTIC"/>
    <property type="match status" value="1"/>
</dbReference>
<dbReference type="Pfam" id="PF00316">
    <property type="entry name" value="FBPase"/>
    <property type="match status" value="1"/>
</dbReference>
<dbReference type="Pfam" id="PF18913">
    <property type="entry name" value="FBPase_C"/>
    <property type="match status" value="1"/>
</dbReference>
<dbReference type="PIRSF" id="PIRSF500210">
    <property type="entry name" value="FBPtase"/>
    <property type="match status" value="1"/>
</dbReference>
<dbReference type="PIRSF" id="PIRSF000904">
    <property type="entry name" value="FBPtase_SBPase"/>
    <property type="match status" value="1"/>
</dbReference>
<dbReference type="PRINTS" id="PR00115">
    <property type="entry name" value="F16BPHPHTASE"/>
</dbReference>
<dbReference type="SUPFAM" id="SSF56655">
    <property type="entry name" value="Carbohydrate phosphatase"/>
    <property type="match status" value="1"/>
</dbReference>
<dbReference type="PROSITE" id="PS00124">
    <property type="entry name" value="FBPASE"/>
    <property type="match status" value="1"/>
</dbReference>
<name>F16PA_ECOLC</name>
<comment type="catalytic activity">
    <reaction evidence="1">
        <text>beta-D-fructose 1,6-bisphosphate + H2O = beta-D-fructose 6-phosphate + phosphate</text>
        <dbReference type="Rhea" id="RHEA:11064"/>
        <dbReference type="ChEBI" id="CHEBI:15377"/>
        <dbReference type="ChEBI" id="CHEBI:32966"/>
        <dbReference type="ChEBI" id="CHEBI:43474"/>
        <dbReference type="ChEBI" id="CHEBI:57634"/>
        <dbReference type="EC" id="3.1.3.11"/>
    </reaction>
</comment>
<comment type="cofactor">
    <cofactor evidence="1">
        <name>Mg(2+)</name>
        <dbReference type="ChEBI" id="CHEBI:18420"/>
    </cofactor>
    <text evidence="1">Binds 2 magnesium ions per subunit.</text>
</comment>
<comment type="pathway">
    <text evidence="1">Carbohydrate biosynthesis; gluconeogenesis.</text>
</comment>
<comment type="subunit">
    <text evidence="1">Homotetramer.</text>
</comment>
<comment type="subcellular location">
    <subcellularLocation>
        <location evidence="1">Cytoplasm</location>
    </subcellularLocation>
</comment>
<comment type="similarity">
    <text evidence="1">Belongs to the FBPase class 1 family.</text>
</comment>
<keyword id="KW-0119">Carbohydrate metabolism</keyword>
<keyword id="KW-0963">Cytoplasm</keyword>
<keyword id="KW-0378">Hydrolase</keyword>
<keyword id="KW-0460">Magnesium</keyword>
<keyword id="KW-0479">Metal-binding</keyword>
<evidence type="ECO:0000255" key="1">
    <source>
        <dbReference type="HAMAP-Rule" id="MF_01855"/>
    </source>
</evidence>
<sequence length="332" mass="36834">MKTLGEFIVEKQHEFSHATGELTALLSAIKLGAKIIHRDINKAGLVDILGASGAENVQGEVQQKLDLFANEKLKAALKARDIVAGIASEEEDEIVVFEGCEHAKYVVLMDPLDGSSNIDVNVSVGTIFSIYRRVTPVGTPVTEEDFLQPGNKQVAAGYVVYGSSTMLVYTTGCGVHAFTYDPSLGVFCLCQERMRFPEKGKTYSINEGNYIKFPNGVKKYIKFCQEEDKSTNRPYTSRYIGSLVADFHRNLLKGGIYLYPSTASHPDGKLRLLYECNPMAFLAEQAGGKASDGKERILDIIPETLHQRRSFFVGNDHMVEDVERFIREFPDA</sequence>
<feature type="chain" id="PRO_0000364545" description="Fructose-1,6-bisphosphatase class 1">
    <location>
        <begin position="1"/>
        <end position="332"/>
    </location>
</feature>
<feature type="binding site" evidence="1">
    <location>
        <position position="89"/>
    </location>
    <ligand>
        <name>Mg(2+)</name>
        <dbReference type="ChEBI" id="CHEBI:18420"/>
        <label>1</label>
    </ligand>
</feature>
<feature type="binding site" evidence="1">
    <location>
        <position position="110"/>
    </location>
    <ligand>
        <name>Mg(2+)</name>
        <dbReference type="ChEBI" id="CHEBI:18420"/>
        <label>1</label>
    </ligand>
</feature>
<feature type="binding site" evidence="1">
    <location>
        <position position="110"/>
    </location>
    <ligand>
        <name>Mg(2+)</name>
        <dbReference type="ChEBI" id="CHEBI:18420"/>
        <label>2</label>
    </ligand>
</feature>
<feature type="binding site" evidence="1">
    <location>
        <position position="112"/>
    </location>
    <ligand>
        <name>Mg(2+)</name>
        <dbReference type="ChEBI" id="CHEBI:18420"/>
        <label>1</label>
    </ligand>
</feature>
<feature type="binding site" evidence="1">
    <location>
        <begin position="113"/>
        <end position="116"/>
    </location>
    <ligand>
        <name>substrate</name>
    </ligand>
</feature>
<feature type="binding site" evidence="1">
    <location>
        <position position="113"/>
    </location>
    <ligand>
        <name>Mg(2+)</name>
        <dbReference type="ChEBI" id="CHEBI:18420"/>
        <label>2</label>
    </ligand>
</feature>
<feature type="binding site" evidence="1">
    <location>
        <position position="206"/>
    </location>
    <ligand>
        <name>substrate</name>
    </ligand>
</feature>
<feature type="binding site" evidence="1">
    <location>
        <position position="239"/>
    </location>
    <ligand>
        <name>substrate</name>
    </ligand>
</feature>
<feature type="binding site" evidence="1">
    <location>
        <begin position="257"/>
        <end position="259"/>
    </location>
    <ligand>
        <name>substrate</name>
    </ligand>
</feature>
<feature type="binding site" evidence="1">
    <location>
        <position position="269"/>
    </location>
    <ligand>
        <name>substrate</name>
    </ligand>
</feature>
<feature type="binding site" evidence="1">
    <location>
        <position position="275"/>
    </location>
    <ligand>
        <name>Mg(2+)</name>
        <dbReference type="ChEBI" id="CHEBI:18420"/>
        <label>2</label>
    </ligand>
</feature>
<organism>
    <name type="scientific">Escherichia coli (strain ATCC 8739 / DSM 1576 / NBRC 3972 / NCIMB 8545 / WDCM 00012 / Crooks)</name>
    <dbReference type="NCBI Taxonomy" id="481805"/>
    <lineage>
        <taxon>Bacteria</taxon>
        <taxon>Pseudomonadati</taxon>
        <taxon>Pseudomonadota</taxon>
        <taxon>Gammaproteobacteria</taxon>
        <taxon>Enterobacterales</taxon>
        <taxon>Enterobacteriaceae</taxon>
        <taxon>Escherichia</taxon>
    </lineage>
</organism>
<gene>
    <name evidence="1" type="primary">fbp</name>
    <name type="ordered locus">EcolC_3779</name>
</gene>
<protein>
    <recommendedName>
        <fullName evidence="1">Fructose-1,6-bisphosphatase class 1</fullName>
        <shortName evidence="1">FBPase class 1</shortName>
        <ecNumber evidence="1">3.1.3.11</ecNumber>
    </recommendedName>
    <alternativeName>
        <fullName evidence="1">D-fructose-1,6-bisphosphate 1-phosphohydrolase class 1</fullName>
    </alternativeName>
</protein>
<reference key="1">
    <citation type="submission" date="2008-02" db="EMBL/GenBank/DDBJ databases">
        <title>Complete sequence of Escherichia coli C str. ATCC 8739.</title>
        <authorList>
            <person name="Copeland A."/>
            <person name="Lucas S."/>
            <person name="Lapidus A."/>
            <person name="Glavina del Rio T."/>
            <person name="Dalin E."/>
            <person name="Tice H."/>
            <person name="Bruce D."/>
            <person name="Goodwin L."/>
            <person name="Pitluck S."/>
            <person name="Kiss H."/>
            <person name="Brettin T."/>
            <person name="Detter J.C."/>
            <person name="Han C."/>
            <person name="Kuske C.R."/>
            <person name="Schmutz J."/>
            <person name="Larimer F."/>
            <person name="Land M."/>
            <person name="Hauser L."/>
            <person name="Kyrpides N."/>
            <person name="Mikhailova N."/>
            <person name="Ingram L."/>
            <person name="Richardson P."/>
        </authorList>
    </citation>
    <scope>NUCLEOTIDE SEQUENCE [LARGE SCALE GENOMIC DNA]</scope>
    <source>
        <strain>ATCC 8739 / DSM 1576 / NBRC 3972 / NCIMB 8545 / WDCM 00012 / Crooks</strain>
    </source>
</reference>
<proteinExistence type="inferred from homology"/>
<accession>B1ISX3</accession>